<gene>
    <name evidence="1" type="primary">aroB</name>
    <name type="ordered locus">CCA_00726</name>
</gene>
<comment type="function">
    <text evidence="1">Catalyzes the conversion of 3-deoxy-D-arabino-heptulosonate 7-phosphate (DAHP) to dehydroquinate (DHQ).</text>
</comment>
<comment type="catalytic activity">
    <reaction evidence="1">
        <text>7-phospho-2-dehydro-3-deoxy-D-arabino-heptonate = 3-dehydroquinate + phosphate</text>
        <dbReference type="Rhea" id="RHEA:21968"/>
        <dbReference type="ChEBI" id="CHEBI:32364"/>
        <dbReference type="ChEBI" id="CHEBI:43474"/>
        <dbReference type="ChEBI" id="CHEBI:58394"/>
        <dbReference type="EC" id="4.2.3.4"/>
    </reaction>
</comment>
<comment type="cofactor">
    <cofactor evidence="1">
        <name>NAD(+)</name>
        <dbReference type="ChEBI" id="CHEBI:57540"/>
    </cofactor>
</comment>
<comment type="cofactor">
    <cofactor evidence="1">
        <name>Co(2+)</name>
        <dbReference type="ChEBI" id="CHEBI:48828"/>
    </cofactor>
    <cofactor evidence="1">
        <name>Zn(2+)</name>
        <dbReference type="ChEBI" id="CHEBI:29105"/>
    </cofactor>
    <text evidence="1">Binds 1 divalent metal cation per subunit. Can use either Co(2+) or Zn(2+).</text>
</comment>
<comment type="pathway">
    <text evidence="1">Metabolic intermediate biosynthesis; chorismate biosynthesis; chorismate from D-erythrose 4-phosphate and phosphoenolpyruvate: step 2/7.</text>
</comment>
<comment type="subcellular location">
    <subcellularLocation>
        <location evidence="1">Cytoplasm</location>
    </subcellularLocation>
</comment>
<comment type="similarity">
    <text evidence="4">Belongs to the sugar phosphate cyclases superfamily. Dehydroquinate synthase family.</text>
</comment>
<sequence length="379" mass="42597">MIENFISDPHNVKFVENFFNSELFSSLSTDYPIVMISDHYVAEELLPPILDFMDNLGYRVILLTFPPGEKNKTWETFISLQNQLIDQGVSLGSTIIGIGGGIILDMAGFLASTYCRGVPLFLIPTTLTAMIDASIGGKNGINLRGFKNRLGTFYPPKDVWICPEFLATLPKKEWLHGIPEAIKHGCIADAYIWEFLDNCRDRLFSSQEILHEFIKRNCMVKAAIVAKDPKDQNLRKTLNFGHTIAHAIETLSKGHISHGLAVSVGMMIEMRISLESGIMKNPYLIEQLDNLLKYFCLPTALQELGSLIPQHLHNEFYHPENILHTLGYDKKNLSKKAVRMVMVEHLGRAASCNGAYCATPHTDILYEVLKSECHVVCNN</sequence>
<evidence type="ECO:0000250" key="1">
    <source>
        <dbReference type="UniProtKB" id="P07639"/>
    </source>
</evidence>
<evidence type="ECO:0000250" key="2">
    <source>
        <dbReference type="UniProtKB" id="P9WPX9"/>
    </source>
</evidence>
<evidence type="ECO:0000250" key="3">
    <source>
        <dbReference type="UniProtKB" id="Q6GGU4"/>
    </source>
</evidence>
<evidence type="ECO:0000305" key="4"/>
<dbReference type="EC" id="4.2.3.4" evidence="1"/>
<dbReference type="EMBL" id="AE015925">
    <property type="protein sequence ID" value="AAP05467.1"/>
    <property type="molecule type" value="Genomic_DNA"/>
</dbReference>
<dbReference type="RefSeq" id="WP_011006681.1">
    <property type="nucleotide sequence ID" value="NC_003361.3"/>
</dbReference>
<dbReference type="SMR" id="Q822F7"/>
<dbReference type="STRING" id="227941.CCA_00726"/>
<dbReference type="KEGG" id="cca:CCA_00726"/>
<dbReference type="eggNOG" id="COG0337">
    <property type="taxonomic scope" value="Bacteria"/>
</dbReference>
<dbReference type="HOGENOM" id="CLU_001201_0_1_0"/>
<dbReference type="OrthoDB" id="9806583at2"/>
<dbReference type="UniPathway" id="UPA00053">
    <property type="reaction ID" value="UER00085"/>
</dbReference>
<dbReference type="Proteomes" id="UP000002193">
    <property type="component" value="Chromosome"/>
</dbReference>
<dbReference type="GO" id="GO:0005737">
    <property type="term" value="C:cytoplasm"/>
    <property type="evidence" value="ECO:0007669"/>
    <property type="project" value="UniProtKB-SubCell"/>
</dbReference>
<dbReference type="GO" id="GO:0003856">
    <property type="term" value="F:3-dehydroquinate synthase activity"/>
    <property type="evidence" value="ECO:0007669"/>
    <property type="project" value="UniProtKB-EC"/>
</dbReference>
<dbReference type="GO" id="GO:0046872">
    <property type="term" value="F:metal ion binding"/>
    <property type="evidence" value="ECO:0007669"/>
    <property type="project" value="UniProtKB-KW"/>
</dbReference>
<dbReference type="GO" id="GO:0000166">
    <property type="term" value="F:nucleotide binding"/>
    <property type="evidence" value="ECO:0007669"/>
    <property type="project" value="UniProtKB-KW"/>
</dbReference>
<dbReference type="GO" id="GO:0008652">
    <property type="term" value="P:amino acid biosynthetic process"/>
    <property type="evidence" value="ECO:0007669"/>
    <property type="project" value="UniProtKB-KW"/>
</dbReference>
<dbReference type="GO" id="GO:0009073">
    <property type="term" value="P:aromatic amino acid family biosynthetic process"/>
    <property type="evidence" value="ECO:0007669"/>
    <property type="project" value="UniProtKB-KW"/>
</dbReference>
<dbReference type="GO" id="GO:0009423">
    <property type="term" value="P:chorismate biosynthetic process"/>
    <property type="evidence" value="ECO:0007669"/>
    <property type="project" value="UniProtKB-UniPathway"/>
</dbReference>
<dbReference type="CDD" id="cd08195">
    <property type="entry name" value="DHQS"/>
    <property type="match status" value="1"/>
</dbReference>
<dbReference type="FunFam" id="3.40.50.1970:FF:000007">
    <property type="entry name" value="Pentafunctional AROM polypeptide"/>
    <property type="match status" value="1"/>
</dbReference>
<dbReference type="Gene3D" id="3.40.50.1970">
    <property type="match status" value="1"/>
</dbReference>
<dbReference type="Gene3D" id="1.20.1090.10">
    <property type="entry name" value="Dehydroquinate synthase-like - alpha domain"/>
    <property type="match status" value="1"/>
</dbReference>
<dbReference type="InterPro" id="IPR050071">
    <property type="entry name" value="Dehydroquinate_synthase"/>
</dbReference>
<dbReference type="InterPro" id="IPR016037">
    <property type="entry name" value="DHQ_synth_AroB"/>
</dbReference>
<dbReference type="InterPro" id="IPR030963">
    <property type="entry name" value="DHQ_synth_fam"/>
</dbReference>
<dbReference type="InterPro" id="IPR030960">
    <property type="entry name" value="DHQS/DOIS_N"/>
</dbReference>
<dbReference type="InterPro" id="IPR056179">
    <property type="entry name" value="DHQS_C"/>
</dbReference>
<dbReference type="NCBIfam" id="TIGR01357">
    <property type="entry name" value="aroB"/>
    <property type="match status" value="1"/>
</dbReference>
<dbReference type="PANTHER" id="PTHR43622">
    <property type="entry name" value="3-DEHYDROQUINATE SYNTHASE"/>
    <property type="match status" value="1"/>
</dbReference>
<dbReference type="PANTHER" id="PTHR43622:SF7">
    <property type="entry name" value="3-DEHYDROQUINATE SYNTHASE, CHLOROPLASTIC"/>
    <property type="match status" value="1"/>
</dbReference>
<dbReference type="Pfam" id="PF01761">
    <property type="entry name" value="DHQ_synthase"/>
    <property type="match status" value="1"/>
</dbReference>
<dbReference type="Pfam" id="PF24621">
    <property type="entry name" value="DHQS_C"/>
    <property type="match status" value="1"/>
</dbReference>
<dbReference type="PIRSF" id="PIRSF001455">
    <property type="entry name" value="DHQ_synth"/>
    <property type="match status" value="1"/>
</dbReference>
<dbReference type="SUPFAM" id="SSF56796">
    <property type="entry name" value="Dehydroquinate synthase-like"/>
    <property type="match status" value="1"/>
</dbReference>
<protein>
    <recommendedName>
        <fullName evidence="1">3-dehydroquinate synthase</fullName>
        <shortName evidence="1">DHQS</shortName>
        <ecNumber evidence="1">4.2.3.4</ecNumber>
    </recommendedName>
</protein>
<keyword id="KW-0028">Amino-acid biosynthesis</keyword>
<keyword id="KW-0057">Aromatic amino acid biosynthesis</keyword>
<keyword id="KW-0170">Cobalt</keyword>
<keyword id="KW-0963">Cytoplasm</keyword>
<keyword id="KW-0456">Lyase</keyword>
<keyword id="KW-0479">Metal-binding</keyword>
<keyword id="KW-0520">NAD</keyword>
<keyword id="KW-0547">Nucleotide-binding</keyword>
<keyword id="KW-0862">Zinc</keyword>
<organism>
    <name type="scientific">Chlamydia caviae (strain ATCC VR-813 / DSM 19441 / 03DC25 / GPIC)</name>
    <name type="common">Chlamydophila caviae</name>
    <dbReference type="NCBI Taxonomy" id="227941"/>
    <lineage>
        <taxon>Bacteria</taxon>
        <taxon>Pseudomonadati</taxon>
        <taxon>Chlamydiota</taxon>
        <taxon>Chlamydiia</taxon>
        <taxon>Chlamydiales</taxon>
        <taxon>Chlamydiaceae</taxon>
        <taxon>Chlamydia/Chlamydophila group</taxon>
        <taxon>Chlamydia</taxon>
    </lineage>
</organism>
<reference key="1">
    <citation type="journal article" date="2003" name="Nucleic Acids Res.">
        <title>Genome sequence of Chlamydophila caviae (Chlamydia psittaci GPIC): examining the role of niche-specific genes in the evolution of the Chlamydiaceae.</title>
        <authorList>
            <person name="Read T.D."/>
            <person name="Myers G.S.A."/>
            <person name="Brunham R.C."/>
            <person name="Nelson W.C."/>
            <person name="Paulsen I.T."/>
            <person name="Heidelberg J.F."/>
            <person name="Holtzapple E.K."/>
            <person name="Khouri H.M."/>
            <person name="Federova N.B."/>
            <person name="Carty H.A."/>
            <person name="Umayam L.A."/>
            <person name="Haft D.H."/>
            <person name="Peterson J.D."/>
            <person name="Beanan M.J."/>
            <person name="White O."/>
            <person name="Salzberg S.L."/>
            <person name="Hsia R.-C."/>
            <person name="McClarty G."/>
            <person name="Rank R.G."/>
            <person name="Bavoil P.M."/>
            <person name="Fraser C.M."/>
        </authorList>
    </citation>
    <scope>NUCLEOTIDE SEQUENCE [LARGE SCALE GENOMIC DNA]</scope>
    <source>
        <strain>ATCC VR-813 / DSM 19441 / 03DC25 / GPIC</strain>
    </source>
</reference>
<accession>Q822F7</accession>
<proteinExistence type="inferred from homology"/>
<name>AROB_CHLCV</name>
<feature type="chain" id="PRO_0000140724" description="3-dehydroquinate synthase">
    <location>
        <begin position="1"/>
        <end position="379"/>
    </location>
</feature>
<feature type="binding site" evidence="2">
    <location>
        <begin position="67"/>
        <end position="72"/>
    </location>
    <ligand>
        <name>NAD(+)</name>
        <dbReference type="ChEBI" id="CHEBI:57540"/>
    </ligand>
</feature>
<feature type="binding site" evidence="2">
    <location>
        <begin position="101"/>
        <end position="105"/>
    </location>
    <ligand>
        <name>NAD(+)</name>
        <dbReference type="ChEBI" id="CHEBI:57540"/>
    </ligand>
</feature>
<feature type="binding site" evidence="2">
    <location>
        <begin position="125"/>
        <end position="126"/>
    </location>
    <ligand>
        <name>NAD(+)</name>
        <dbReference type="ChEBI" id="CHEBI:57540"/>
    </ligand>
</feature>
<feature type="binding site" evidence="2">
    <location>
        <position position="138"/>
    </location>
    <ligand>
        <name>NAD(+)</name>
        <dbReference type="ChEBI" id="CHEBI:57540"/>
    </ligand>
</feature>
<feature type="binding site" evidence="3">
    <location>
        <position position="147"/>
    </location>
    <ligand>
        <name>NAD(+)</name>
        <dbReference type="ChEBI" id="CHEBI:57540"/>
    </ligand>
</feature>
<feature type="binding site" evidence="2">
    <location>
        <position position="180"/>
    </location>
    <ligand>
        <name>Zn(2+)</name>
        <dbReference type="ChEBI" id="CHEBI:29105"/>
    </ligand>
</feature>
<feature type="binding site" evidence="2">
    <location>
        <position position="242"/>
    </location>
    <ligand>
        <name>Zn(2+)</name>
        <dbReference type="ChEBI" id="CHEBI:29105"/>
    </ligand>
</feature>
<feature type="binding site" evidence="2">
    <location>
        <position position="258"/>
    </location>
    <ligand>
        <name>Zn(2+)</name>
        <dbReference type="ChEBI" id="CHEBI:29105"/>
    </ligand>
</feature>